<sequence>MALYDEDLLKNPFYLALQKWRPDLCSKVAQIHGIVLVPCRGSLPGSVQASCQFESYVLVPTEGHFQTLDGKAVVIEGNRIKLGAGFACLLSVPILFEETFYNEKEESFSILCIAHPLERRETSEEPSAPADPFSLKTIEDVREFLGRHSEKFDKNIASFHRTFRECERKSLRHHIDSVNALYTKCLQQLLRDSHLKVLAKQEAQMNLMKQAVEMYVHHDIYDLIFKYVGTMEASEDAAFNKITRSLQDLQQKDIGVKPEFSFNIPRAKRELGQLNKCTSPQQKLLCLRKVVQLMTQSPSQRVNLETMCADDLLSVLLYLLVKTEIPNWMANLSYIKNFRFSSSAKDELGYCLTSVEAAIEYIRQGSLSTKTPDAEGFGDRLFLKQRMNLLSQMTSTPIDCLFKHIASGNQKEVERLLSQDDQDKDAMQKMCHPLCSCEDCEKLISGRLNDPSVVTPFSRDDRGQTPLHVAALCGQASLIDFLVSKGAVVNATDYHGSTPLHLACQKGFQSVTLLLLHYKASTEVQDNNGNTPLHLACTYGQEDCVKALVYYDVQACRLDIGNEKGDTALHIAARWGYEGIIETLLQNGAPTAVQNRLKETPLKCALNSKILSIMEAHHLSSDRRPRPSEVPAQSPTRSVDSISQGSSTSSFSSISVSFRQEEVKKDYREVEKLLRAVADGDLEMVRYLLEWTEDDLDDVEDAISTVDLEFCHPLCQCPKCAPAQKLARISANGLSVNVTNQDGFSPLHMAALHGRTDLVPLLLKHGAYSGARNTSQAVPLHLACQQGHFQVAKCLLDSNAKPNKKDLSGNTPLICACSAGHHEVAALLLQHGASINACNNKGNTALHEAVMGRHTLVVELLLFYGASVDILNKRQYTAADCAEQDSKIMELLQVVPGCVASLDSVEEADHEGYVTVEIRRKWNPKMYNLPEEPLRRQFCLINPGGRFQERTSRETMGRDRSVPDLAGRSLQEPEKQRVTGKQSDLSDLSRYQTSEEGNKGLPERPVSRQAAPGHRPMVRRHTVNDAAILQVPEVTVHLTTHEASVPQS</sequence>
<proteinExistence type="evidence at protein level"/>
<protein>
    <recommendedName>
        <fullName>Ankyrin repeat domain-containing protein 27</fullName>
    </recommendedName>
    <alternativeName>
        <fullName>VPS9 domain-containing protein</fullName>
    </alternativeName>
    <alternativeName>
        <fullName>VPS9-ankyrin-repeat protein</fullName>
    </alternativeName>
</protein>
<feature type="chain" id="PRO_0000274557" description="Ankyrin repeat domain-containing protein 27">
    <location>
        <begin position="1"/>
        <end position="1048"/>
    </location>
</feature>
<feature type="domain" description="VPS9" evidence="2">
    <location>
        <begin position="233"/>
        <end position="371"/>
    </location>
</feature>
<feature type="repeat" description="ANK 1">
    <location>
        <begin position="396"/>
        <end position="426"/>
    </location>
</feature>
<feature type="repeat" description="ANK 2">
    <location>
        <begin position="462"/>
        <end position="491"/>
    </location>
</feature>
<feature type="repeat" description="ANK 3">
    <location>
        <begin position="495"/>
        <end position="524"/>
    </location>
</feature>
<feature type="repeat" description="ANK 4">
    <location>
        <begin position="528"/>
        <end position="557"/>
    </location>
</feature>
<feature type="repeat" description="ANK 5">
    <location>
        <begin position="564"/>
        <end position="593"/>
    </location>
</feature>
<feature type="repeat" description="ANK 6">
    <location>
        <begin position="597"/>
        <end position="627"/>
    </location>
</feature>
<feature type="repeat" description="ANK 7">
    <location>
        <begin position="668"/>
        <end position="698"/>
    </location>
</feature>
<feature type="repeat" description="ANK 8">
    <location>
        <begin position="742"/>
        <end position="771"/>
    </location>
</feature>
<feature type="repeat" description="ANK 9">
    <location>
        <begin position="775"/>
        <end position="804"/>
    </location>
</feature>
<feature type="repeat" description="ANK 10">
    <location>
        <begin position="808"/>
        <end position="837"/>
    </location>
</feature>
<feature type="repeat" description="ANK 11">
    <location>
        <begin position="841"/>
        <end position="870"/>
    </location>
</feature>
<feature type="region of interest" description="Sufficient for GEF activity towards RAB21" evidence="1">
    <location>
        <begin position="1"/>
        <end position="372"/>
    </location>
</feature>
<feature type="region of interest" description="Sufficient for interaction with VPS29" evidence="1">
    <location>
        <begin position="396"/>
        <end position="460"/>
    </location>
</feature>
<feature type="region of interest" description="Interaction with RAB32" evidence="5">
    <location>
        <begin position="451"/>
        <end position="729"/>
    </location>
</feature>
<feature type="region of interest" description="Interaction with RAB38" evidence="5">
    <location>
        <begin position="451"/>
        <end position="600"/>
    </location>
</feature>
<feature type="region of interest" description="Disordered" evidence="3">
    <location>
        <begin position="618"/>
        <end position="650"/>
    </location>
</feature>
<feature type="region of interest" description="Required for interaction with VAMP7" evidence="1 6">
    <location>
        <begin position="658"/>
        <end position="707"/>
    </location>
</feature>
<feature type="region of interest" description="Sufficient for interaction with VPS29" evidence="1">
    <location>
        <begin position="692"/>
        <end position="745"/>
    </location>
</feature>
<feature type="region of interest" description="Disordered" evidence="3">
    <location>
        <begin position="949"/>
        <end position="1019"/>
    </location>
</feature>
<feature type="compositionally biased region" description="Basic and acidic residues" evidence="3">
    <location>
        <begin position="618"/>
        <end position="627"/>
    </location>
</feature>
<feature type="compositionally biased region" description="Low complexity" evidence="3">
    <location>
        <begin position="638"/>
        <end position="650"/>
    </location>
</feature>
<feature type="compositionally biased region" description="Basic and acidic residues" evidence="3">
    <location>
        <begin position="949"/>
        <end position="962"/>
    </location>
</feature>
<feature type="compositionally biased region" description="Polar residues" evidence="3">
    <location>
        <begin position="979"/>
        <end position="995"/>
    </location>
</feature>
<feature type="compositionally biased region" description="Basic and acidic residues" evidence="3">
    <location>
        <begin position="996"/>
        <end position="1006"/>
    </location>
</feature>
<feature type="modified residue" description="Phosphoserine" evidence="13 14">
    <location>
        <position position="961"/>
    </location>
</feature>
<feature type="modified residue" description="Phosphoserine" evidence="1">
    <location>
        <position position="969"/>
    </location>
</feature>
<feature type="modified residue" description="Phosphothreonine" evidence="1">
    <location>
        <position position="1022"/>
    </location>
</feature>
<feature type="splice variant" id="VSP_022791" description="In isoform 3." evidence="10">
    <location>
        <begin position="630"/>
        <end position="670"/>
    </location>
</feature>
<feature type="splice variant" id="VSP_022792" description="In isoform 2." evidence="11">
    <location>
        <begin position="670"/>
        <end position="724"/>
    </location>
</feature>
<feature type="mutagenesis site" description="Inhibits dendrite formation." evidence="8">
    <original>D</original>
    <variation>A</variation>
    <location>
        <position position="310"/>
    </location>
</feature>
<feature type="mutagenesis site" description="Inhibits dendrite formation." evidence="8">
    <original>Y</original>
    <variation>A</variation>
    <location>
        <position position="350"/>
    </location>
</feature>
<feature type="mutagenesis site" description="Disrupts interaction with RAB32 and RAB38; inhibits peripheral distribution of TYRP1 in melanocytes; no effect on dendrite formation in melanocytes." evidence="7 8">
    <original>Q</original>
    <variation>A</variation>
    <location>
        <position position="509"/>
    </location>
</feature>
<feature type="mutagenesis site" description="Disrupts interaction with RAB32 and RAB38; inhibits peripheral distribution of TYRP1 in melanocytes; no effect on dendrite formation in melanocytes." evidence="7 8">
    <original>Y</original>
    <variation>A</variation>
    <location>
        <position position="550"/>
    </location>
</feature>
<feature type="mutagenesis site" description="Impairs interaction with RAB32 and RAB38." evidence="7">
    <original>W</original>
    <variation>A</variation>
    <location>
        <position position="575"/>
    </location>
</feature>
<feature type="mutagenesis site" description="Impairs interaction with RAB32 and RAB38." evidence="7">
    <original>Y</original>
    <variation>A</variation>
    <location>
        <position position="577"/>
    </location>
</feature>
<feature type="sequence conflict" description="In Ref. 2; BAC39537." evidence="12" ref="2">
    <original>QQKLLCLRKVVQLMTQSPSQRVNLETMCAD</original>
    <variation>TAEAAVPEEGGPAHDTISQPESELGDHVCR</variation>
    <location>
        <begin position="281"/>
        <end position="310"/>
    </location>
</feature>
<feature type="sequence conflict" description="In Ref. 4; BAD21367." evidence="12" ref="4">
    <original>TP</original>
    <variation>PQ</variation>
    <location>
        <begin position="371"/>
        <end position="372"/>
    </location>
</feature>
<feature type="sequence conflict" description="In Ref. 3; AAH16493." evidence="12" ref="3">
    <original>DAEGF</original>
    <variation>VRSPC</variation>
    <location>
        <begin position="373"/>
        <end position="377"/>
    </location>
</feature>
<feature type="sequence conflict" description="In Ref. 2; BAE26038." evidence="12" ref="2">
    <original>P</original>
    <variation>Q</variation>
    <location>
        <position position="601"/>
    </location>
</feature>
<feature type="sequence conflict" description="In Ref. 4; BAD21367." evidence="12" ref="4">
    <original>K</original>
    <variation>KV</variation>
    <location>
        <position position="609"/>
    </location>
</feature>
<feature type="sequence conflict" description="In Ref. 1; AAP94281." evidence="12" ref="1">
    <original>S</original>
    <variation>P</variation>
    <location>
        <position position="730"/>
    </location>
</feature>
<dbReference type="EMBL" id="AY336500">
    <property type="protein sequence ID" value="AAP94281.1"/>
    <property type="status" value="ALT_FRAME"/>
    <property type="molecule type" value="mRNA"/>
</dbReference>
<dbReference type="EMBL" id="AK085796">
    <property type="protein sequence ID" value="BAC39537.1"/>
    <property type="molecule type" value="mRNA"/>
</dbReference>
<dbReference type="EMBL" id="AK144733">
    <property type="protein sequence ID" value="BAE26038.1"/>
    <property type="molecule type" value="mRNA"/>
</dbReference>
<dbReference type="EMBL" id="BC016493">
    <property type="protein sequence ID" value="AAH16493.1"/>
    <property type="molecule type" value="mRNA"/>
</dbReference>
<dbReference type="EMBL" id="BC065093">
    <property type="protein sequence ID" value="AAH65093.1"/>
    <property type="molecule type" value="mRNA"/>
</dbReference>
<dbReference type="EMBL" id="AK131117">
    <property type="protein sequence ID" value="BAD21367.1"/>
    <property type="molecule type" value="Transcribed_RNA"/>
</dbReference>
<dbReference type="CCDS" id="CCDS21154.1">
    <molecule id="Q3UMR0-1"/>
</dbReference>
<dbReference type="RefSeq" id="NP_663608.3">
    <molecule id="Q3UMR0-1"/>
    <property type="nucleotide sequence ID" value="NM_145633.3"/>
</dbReference>
<dbReference type="RefSeq" id="NP_839994.1">
    <property type="nucleotide sequence ID" value="NM_178263.3"/>
</dbReference>
<dbReference type="SMR" id="Q3UMR0"/>
<dbReference type="BioGRID" id="232848">
    <property type="interactions" value="4"/>
</dbReference>
<dbReference type="FunCoup" id="Q3UMR0">
    <property type="interactions" value="3631"/>
</dbReference>
<dbReference type="IntAct" id="Q3UMR0">
    <property type="interactions" value="3"/>
</dbReference>
<dbReference type="MINT" id="Q3UMR0"/>
<dbReference type="STRING" id="10090.ENSMUSP00000041751"/>
<dbReference type="GlyGen" id="Q3UMR0">
    <property type="glycosylation" value="1 site, 1 N-linked glycan (1 site)"/>
</dbReference>
<dbReference type="iPTMnet" id="Q3UMR0"/>
<dbReference type="PhosphoSitePlus" id="Q3UMR0"/>
<dbReference type="PaxDb" id="10090-ENSMUSP00000041751"/>
<dbReference type="ProteomicsDB" id="281999">
    <molecule id="Q3UMR0-1"/>
</dbReference>
<dbReference type="ProteomicsDB" id="282000">
    <molecule id="Q3UMR0-2"/>
</dbReference>
<dbReference type="ProteomicsDB" id="282001">
    <molecule id="Q3UMR0-3"/>
</dbReference>
<dbReference type="Pumba" id="Q3UMR0"/>
<dbReference type="Antibodypedia" id="47942">
    <property type="antibodies" value="89 antibodies from 25 providers"/>
</dbReference>
<dbReference type="DNASU" id="245886"/>
<dbReference type="Ensembl" id="ENSMUST00000040844.16">
    <molecule id="Q3UMR0-1"/>
    <property type="protein sequence ID" value="ENSMUSP00000041751.10"/>
    <property type="gene ID" value="ENSMUSG00000034867.17"/>
</dbReference>
<dbReference type="Ensembl" id="ENSMUST00000190503.7">
    <molecule id="Q3UMR0-2"/>
    <property type="protein sequence ID" value="ENSMUSP00000140259.2"/>
    <property type="gene ID" value="ENSMUSG00000034867.17"/>
</dbReference>
<dbReference type="GeneID" id="245886"/>
<dbReference type="KEGG" id="mmu:245886"/>
<dbReference type="UCSC" id="uc009gkd.1">
    <molecule id="Q3UMR0-1"/>
    <property type="organism name" value="mouse"/>
</dbReference>
<dbReference type="UCSC" id="uc012fin.1">
    <molecule id="Q3UMR0-2"/>
    <property type="organism name" value="mouse"/>
</dbReference>
<dbReference type="AGR" id="MGI:2444103"/>
<dbReference type="CTD" id="84079"/>
<dbReference type="MGI" id="MGI:2444103">
    <property type="gene designation" value="Ankrd27"/>
</dbReference>
<dbReference type="VEuPathDB" id="HostDB:ENSMUSG00000034867"/>
<dbReference type="eggNOG" id="KOG2319">
    <property type="taxonomic scope" value="Eukaryota"/>
</dbReference>
<dbReference type="GeneTree" id="ENSGT00940000157021"/>
<dbReference type="HOGENOM" id="CLU_010760_0_1_1"/>
<dbReference type="InParanoid" id="Q3UMR0"/>
<dbReference type="OMA" id="WIVCVPR"/>
<dbReference type="OrthoDB" id="411646at2759"/>
<dbReference type="PhylomeDB" id="Q3UMR0"/>
<dbReference type="TreeFam" id="TF351261"/>
<dbReference type="Reactome" id="R-MMU-8876198">
    <property type="pathway name" value="RAB GEFs exchange GTP for GDP on RABs"/>
</dbReference>
<dbReference type="BioGRID-ORCS" id="245886">
    <property type="hits" value="2 hits in 79 CRISPR screens"/>
</dbReference>
<dbReference type="ChiTaRS" id="Ankrd27">
    <property type="organism name" value="mouse"/>
</dbReference>
<dbReference type="PRO" id="PR:Q3UMR0"/>
<dbReference type="Proteomes" id="UP000000589">
    <property type="component" value="Chromosome 7"/>
</dbReference>
<dbReference type="RNAct" id="Q3UMR0">
    <property type="molecule type" value="protein"/>
</dbReference>
<dbReference type="Bgee" id="ENSMUSG00000034867">
    <property type="expression patterns" value="Expressed in retinal neural layer and 225 other cell types or tissues"/>
</dbReference>
<dbReference type="ExpressionAtlas" id="Q3UMR0">
    <property type="expression patterns" value="baseline and differential"/>
</dbReference>
<dbReference type="GO" id="GO:0030659">
    <property type="term" value="C:cytoplasmic vesicle membrane"/>
    <property type="evidence" value="ECO:0007669"/>
    <property type="project" value="UniProtKB-SubCell"/>
</dbReference>
<dbReference type="GO" id="GO:0005829">
    <property type="term" value="C:cytosol"/>
    <property type="evidence" value="ECO:0007669"/>
    <property type="project" value="Ensembl"/>
</dbReference>
<dbReference type="GO" id="GO:0005769">
    <property type="term" value="C:early endosome"/>
    <property type="evidence" value="ECO:0000266"/>
    <property type="project" value="MGI"/>
</dbReference>
<dbReference type="GO" id="GO:0005770">
    <property type="term" value="C:late endosome"/>
    <property type="evidence" value="ECO:0007669"/>
    <property type="project" value="UniProtKB-SubCell"/>
</dbReference>
<dbReference type="GO" id="GO:0005764">
    <property type="term" value="C:lysosome"/>
    <property type="evidence" value="ECO:0007669"/>
    <property type="project" value="UniProtKB-SubCell"/>
</dbReference>
<dbReference type="GO" id="GO:0042470">
    <property type="term" value="C:melanosome"/>
    <property type="evidence" value="ECO:0000314"/>
    <property type="project" value="UniProtKB"/>
</dbReference>
<dbReference type="GO" id="GO:0043005">
    <property type="term" value="C:neuron projection"/>
    <property type="evidence" value="ECO:0000314"/>
    <property type="project" value="UniProtKB"/>
</dbReference>
<dbReference type="GO" id="GO:0005886">
    <property type="term" value="C:plasma membrane"/>
    <property type="evidence" value="ECO:0007669"/>
    <property type="project" value="UniProtKB-SubCell"/>
</dbReference>
<dbReference type="GO" id="GO:0030133">
    <property type="term" value="C:transport vesicle"/>
    <property type="evidence" value="ECO:0000314"/>
    <property type="project" value="UniProtKB"/>
</dbReference>
<dbReference type="GO" id="GO:0097422">
    <property type="term" value="C:tubular endosome"/>
    <property type="evidence" value="ECO:0007669"/>
    <property type="project" value="Ensembl"/>
</dbReference>
<dbReference type="GO" id="GO:0005096">
    <property type="term" value="F:GTPase activator activity"/>
    <property type="evidence" value="ECO:0007669"/>
    <property type="project" value="UniProtKB-KW"/>
</dbReference>
<dbReference type="GO" id="GO:0005085">
    <property type="term" value="F:guanyl-nucleotide exchange factor activity"/>
    <property type="evidence" value="ECO:0000266"/>
    <property type="project" value="MGI"/>
</dbReference>
<dbReference type="GO" id="GO:0031267">
    <property type="term" value="F:small GTPase binding"/>
    <property type="evidence" value="ECO:0000314"/>
    <property type="project" value="UniProtKB"/>
</dbReference>
<dbReference type="GO" id="GO:0000149">
    <property type="term" value="F:SNARE binding"/>
    <property type="evidence" value="ECO:0000314"/>
    <property type="project" value="UniProtKB"/>
</dbReference>
<dbReference type="GO" id="GO:0045022">
    <property type="term" value="P:early endosome to late endosome transport"/>
    <property type="evidence" value="ECO:0000266"/>
    <property type="project" value="MGI"/>
</dbReference>
<dbReference type="GO" id="GO:0032456">
    <property type="term" value="P:endocytic recycling"/>
    <property type="evidence" value="ECO:0007669"/>
    <property type="project" value="Ensembl"/>
</dbReference>
<dbReference type="GO" id="GO:0035646">
    <property type="term" value="P:endosome to melanosome transport"/>
    <property type="evidence" value="ECO:0000314"/>
    <property type="project" value="UniProtKB"/>
</dbReference>
<dbReference type="GO" id="GO:0035544">
    <property type="term" value="P:negative regulation of SNARE complex assembly"/>
    <property type="evidence" value="ECO:0007669"/>
    <property type="project" value="Ensembl"/>
</dbReference>
<dbReference type="GO" id="GO:0048812">
    <property type="term" value="P:neuron projection morphogenesis"/>
    <property type="evidence" value="ECO:0000315"/>
    <property type="project" value="UniProtKB"/>
</dbReference>
<dbReference type="GO" id="GO:0050775">
    <property type="term" value="P:positive regulation of dendrite morphogenesis"/>
    <property type="evidence" value="ECO:0000315"/>
    <property type="project" value="UniProtKB"/>
</dbReference>
<dbReference type="GO" id="GO:0010976">
    <property type="term" value="P:positive regulation of neuron projection development"/>
    <property type="evidence" value="ECO:0007669"/>
    <property type="project" value="Ensembl"/>
</dbReference>
<dbReference type="GO" id="GO:0015031">
    <property type="term" value="P:protein transport"/>
    <property type="evidence" value="ECO:0007669"/>
    <property type="project" value="UniProtKB-KW"/>
</dbReference>
<dbReference type="CDD" id="cd22885">
    <property type="entry name" value="ANKRD27_zf1"/>
    <property type="match status" value="1"/>
</dbReference>
<dbReference type="CDD" id="cd22886">
    <property type="entry name" value="ANKRD27_zf2"/>
    <property type="match status" value="1"/>
</dbReference>
<dbReference type="FunFam" id="1.25.40.20:FF:000065">
    <property type="entry name" value="Ankyrin repeat domain-containing protein 27"/>
    <property type="match status" value="1"/>
</dbReference>
<dbReference type="FunFam" id="1.25.40.20:FF:000087">
    <property type="entry name" value="Ankyrin repeat domain-containing protein 27"/>
    <property type="match status" value="1"/>
</dbReference>
<dbReference type="FunFam" id="1.20.1050.80:FF:000004">
    <property type="entry name" value="ankyrin repeat domain-containing protein 27"/>
    <property type="match status" value="1"/>
</dbReference>
<dbReference type="Gene3D" id="1.25.40.20">
    <property type="entry name" value="Ankyrin repeat-containing domain"/>
    <property type="match status" value="2"/>
</dbReference>
<dbReference type="Gene3D" id="1.20.1050.80">
    <property type="entry name" value="VPS9 domain"/>
    <property type="match status" value="1"/>
</dbReference>
<dbReference type="InterPro" id="IPR002110">
    <property type="entry name" value="Ankyrin_rpt"/>
</dbReference>
<dbReference type="InterPro" id="IPR036770">
    <property type="entry name" value="Ankyrin_rpt-contain_sf"/>
</dbReference>
<dbReference type="InterPro" id="IPR051248">
    <property type="entry name" value="UPF0507/Ank_repeat_27"/>
</dbReference>
<dbReference type="InterPro" id="IPR003123">
    <property type="entry name" value="VPS9"/>
</dbReference>
<dbReference type="InterPro" id="IPR037191">
    <property type="entry name" value="VPS9_dom_sf"/>
</dbReference>
<dbReference type="PANTHER" id="PTHR24170">
    <property type="entry name" value="ANKYRIN REPEAT DOMAIN-CONTAINING PROTEIN 27"/>
    <property type="match status" value="1"/>
</dbReference>
<dbReference type="PANTHER" id="PTHR24170:SF2">
    <property type="entry name" value="ANKYRIN REPEAT DOMAIN-CONTAINING PROTEIN 27"/>
    <property type="match status" value="1"/>
</dbReference>
<dbReference type="Pfam" id="PF12796">
    <property type="entry name" value="Ank_2"/>
    <property type="match status" value="2"/>
</dbReference>
<dbReference type="Pfam" id="PF13637">
    <property type="entry name" value="Ank_4"/>
    <property type="match status" value="1"/>
</dbReference>
<dbReference type="Pfam" id="PF13857">
    <property type="entry name" value="Ank_5"/>
    <property type="match status" value="1"/>
</dbReference>
<dbReference type="Pfam" id="PF02204">
    <property type="entry name" value="VPS9"/>
    <property type="match status" value="1"/>
</dbReference>
<dbReference type="PRINTS" id="PR01415">
    <property type="entry name" value="ANKYRIN"/>
</dbReference>
<dbReference type="SMART" id="SM00248">
    <property type="entry name" value="ANK"/>
    <property type="match status" value="8"/>
</dbReference>
<dbReference type="SMART" id="SM00167">
    <property type="entry name" value="VPS9"/>
    <property type="match status" value="1"/>
</dbReference>
<dbReference type="SUPFAM" id="SSF48403">
    <property type="entry name" value="Ankyrin repeat"/>
    <property type="match status" value="2"/>
</dbReference>
<dbReference type="SUPFAM" id="SSF109993">
    <property type="entry name" value="VPS9 domain"/>
    <property type="match status" value="1"/>
</dbReference>
<dbReference type="PROSITE" id="PS50297">
    <property type="entry name" value="ANK_REP_REGION"/>
    <property type="match status" value="1"/>
</dbReference>
<dbReference type="PROSITE" id="PS50088">
    <property type="entry name" value="ANK_REPEAT"/>
    <property type="match status" value="8"/>
</dbReference>
<dbReference type="PROSITE" id="PS51205">
    <property type="entry name" value="VPS9"/>
    <property type="match status" value="1"/>
</dbReference>
<reference key="1">
    <citation type="journal article" date="2006" name="J. Cell Sci.">
        <title>Varp is a Rab21 guanine nucleotide exchange factor and regulates endosome dynamics.</title>
        <authorList>
            <person name="Zhang X."/>
            <person name="He X."/>
            <person name="Fu X.-Y."/>
            <person name="Chang Z."/>
        </authorList>
    </citation>
    <scope>NUCLEOTIDE SEQUENCE [MRNA] (ISOFORM 1)</scope>
    <source>
        <strain>BALB/cJ</strain>
        <tissue>Testis</tissue>
    </source>
</reference>
<reference key="2">
    <citation type="journal article" date="2005" name="Science">
        <title>The transcriptional landscape of the mammalian genome.</title>
        <authorList>
            <person name="Carninci P."/>
            <person name="Kasukawa T."/>
            <person name="Katayama S."/>
            <person name="Gough J."/>
            <person name="Frith M.C."/>
            <person name="Maeda N."/>
            <person name="Oyama R."/>
            <person name="Ravasi T."/>
            <person name="Lenhard B."/>
            <person name="Wells C."/>
            <person name="Kodzius R."/>
            <person name="Shimokawa K."/>
            <person name="Bajic V.B."/>
            <person name="Brenner S.E."/>
            <person name="Batalov S."/>
            <person name="Forrest A.R."/>
            <person name="Zavolan M."/>
            <person name="Davis M.J."/>
            <person name="Wilming L.G."/>
            <person name="Aidinis V."/>
            <person name="Allen J.E."/>
            <person name="Ambesi-Impiombato A."/>
            <person name="Apweiler R."/>
            <person name="Aturaliya R.N."/>
            <person name="Bailey T.L."/>
            <person name="Bansal M."/>
            <person name="Baxter L."/>
            <person name="Beisel K.W."/>
            <person name="Bersano T."/>
            <person name="Bono H."/>
            <person name="Chalk A.M."/>
            <person name="Chiu K.P."/>
            <person name="Choudhary V."/>
            <person name="Christoffels A."/>
            <person name="Clutterbuck D.R."/>
            <person name="Crowe M.L."/>
            <person name="Dalla E."/>
            <person name="Dalrymple B.P."/>
            <person name="de Bono B."/>
            <person name="Della Gatta G."/>
            <person name="di Bernardo D."/>
            <person name="Down T."/>
            <person name="Engstrom P."/>
            <person name="Fagiolini M."/>
            <person name="Faulkner G."/>
            <person name="Fletcher C.F."/>
            <person name="Fukushima T."/>
            <person name="Furuno M."/>
            <person name="Futaki S."/>
            <person name="Gariboldi M."/>
            <person name="Georgii-Hemming P."/>
            <person name="Gingeras T.R."/>
            <person name="Gojobori T."/>
            <person name="Green R.E."/>
            <person name="Gustincich S."/>
            <person name="Harbers M."/>
            <person name="Hayashi Y."/>
            <person name="Hensch T.K."/>
            <person name="Hirokawa N."/>
            <person name="Hill D."/>
            <person name="Huminiecki L."/>
            <person name="Iacono M."/>
            <person name="Ikeo K."/>
            <person name="Iwama A."/>
            <person name="Ishikawa T."/>
            <person name="Jakt M."/>
            <person name="Kanapin A."/>
            <person name="Katoh M."/>
            <person name="Kawasawa Y."/>
            <person name="Kelso J."/>
            <person name="Kitamura H."/>
            <person name="Kitano H."/>
            <person name="Kollias G."/>
            <person name="Krishnan S.P."/>
            <person name="Kruger A."/>
            <person name="Kummerfeld S.K."/>
            <person name="Kurochkin I.V."/>
            <person name="Lareau L.F."/>
            <person name="Lazarevic D."/>
            <person name="Lipovich L."/>
            <person name="Liu J."/>
            <person name="Liuni S."/>
            <person name="McWilliam S."/>
            <person name="Madan Babu M."/>
            <person name="Madera M."/>
            <person name="Marchionni L."/>
            <person name="Matsuda H."/>
            <person name="Matsuzawa S."/>
            <person name="Miki H."/>
            <person name="Mignone F."/>
            <person name="Miyake S."/>
            <person name="Morris K."/>
            <person name="Mottagui-Tabar S."/>
            <person name="Mulder N."/>
            <person name="Nakano N."/>
            <person name="Nakauchi H."/>
            <person name="Ng P."/>
            <person name="Nilsson R."/>
            <person name="Nishiguchi S."/>
            <person name="Nishikawa S."/>
            <person name="Nori F."/>
            <person name="Ohara O."/>
            <person name="Okazaki Y."/>
            <person name="Orlando V."/>
            <person name="Pang K.C."/>
            <person name="Pavan W.J."/>
            <person name="Pavesi G."/>
            <person name="Pesole G."/>
            <person name="Petrovsky N."/>
            <person name="Piazza S."/>
            <person name="Reed J."/>
            <person name="Reid J.F."/>
            <person name="Ring B.Z."/>
            <person name="Ringwald M."/>
            <person name="Rost B."/>
            <person name="Ruan Y."/>
            <person name="Salzberg S.L."/>
            <person name="Sandelin A."/>
            <person name="Schneider C."/>
            <person name="Schoenbach C."/>
            <person name="Sekiguchi K."/>
            <person name="Semple C.A."/>
            <person name="Seno S."/>
            <person name="Sessa L."/>
            <person name="Sheng Y."/>
            <person name="Shibata Y."/>
            <person name="Shimada H."/>
            <person name="Shimada K."/>
            <person name="Silva D."/>
            <person name="Sinclair B."/>
            <person name="Sperling S."/>
            <person name="Stupka E."/>
            <person name="Sugiura K."/>
            <person name="Sultana R."/>
            <person name="Takenaka Y."/>
            <person name="Taki K."/>
            <person name="Tammoja K."/>
            <person name="Tan S.L."/>
            <person name="Tang S."/>
            <person name="Taylor M.S."/>
            <person name="Tegner J."/>
            <person name="Teichmann S.A."/>
            <person name="Ueda H.R."/>
            <person name="van Nimwegen E."/>
            <person name="Verardo R."/>
            <person name="Wei C.L."/>
            <person name="Yagi K."/>
            <person name="Yamanishi H."/>
            <person name="Zabarovsky E."/>
            <person name="Zhu S."/>
            <person name="Zimmer A."/>
            <person name="Hide W."/>
            <person name="Bult C."/>
            <person name="Grimmond S.M."/>
            <person name="Teasdale R.D."/>
            <person name="Liu E.T."/>
            <person name="Brusic V."/>
            <person name="Quackenbush J."/>
            <person name="Wahlestedt C."/>
            <person name="Mattick J.S."/>
            <person name="Hume D.A."/>
            <person name="Kai C."/>
            <person name="Sasaki D."/>
            <person name="Tomaru Y."/>
            <person name="Fukuda S."/>
            <person name="Kanamori-Katayama M."/>
            <person name="Suzuki M."/>
            <person name="Aoki J."/>
            <person name="Arakawa T."/>
            <person name="Iida J."/>
            <person name="Imamura K."/>
            <person name="Itoh M."/>
            <person name="Kato T."/>
            <person name="Kawaji H."/>
            <person name="Kawagashira N."/>
            <person name="Kawashima T."/>
            <person name="Kojima M."/>
            <person name="Kondo S."/>
            <person name="Konno H."/>
            <person name="Nakano K."/>
            <person name="Ninomiya N."/>
            <person name="Nishio T."/>
            <person name="Okada M."/>
            <person name="Plessy C."/>
            <person name="Shibata K."/>
            <person name="Shiraki T."/>
            <person name="Suzuki S."/>
            <person name="Tagami M."/>
            <person name="Waki K."/>
            <person name="Watahiki A."/>
            <person name="Okamura-Oho Y."/>
            <person name="Suzuki H."/>
            <person name="Kawai J."/>
            <person name="Hayashizaki Y."/>
        </authorList>
    </citation>
    <scope>NUCLEOTIDE SEQUENCE [LARGE SCALE MRNA] (ISOFORM 1)</scope>
    <source>
        <strain>C57BL/6J</strain>
        <tissue>Heart</tissue>
        <tissue>Lung</tissue>
    </source>
</reference>
<reference key="3">
    <citation type="journal article" date="2004" name="Genome Res.">
        <title>The status, quality, and expansion of the NIH full-length cDNA project: the Mammalian Gene Collection (MGC).</title>
        <authorList>
            <consortium name="The MGC Project Team"/>
        </authorList>
    </citation>
    <scope>NUCLEOTIDE SEQUENCE [LARGE SCALE MRNA] (ISOFORM 2)</scope>
    <source>
        <strain>C57BL/6J</strain>
        <strain>FVB/N</strain>
        <tissue>Brain</tissue>
        <tissue>Kidney</tissue>
    </source>
</reference>
<reference key="4">
    <citation type="journal article" date="2004" name="DNA Res.">
        <title>Prediction of the coding sequences of mouse homologues of FLJ genes: the complete nucleotide sequences of 110 mouse FLJ-homologous cDNAs identified by screening of terminal sequences of cDNA clones randomly sampled from size-fractionated libraries.</title>
        <authorList>
            <person name="Okazaki N."/>
            <person name="Kikuno R."/>
            <person name="Ohara R."/>
            <person name="Inamoto S."/>
            <person name="Koseki H."/>
            <person name="Hiraoka S."/>
            <person name="Saga Y."/>
            <person name="Kitamura H."/>
            <person name="Nakagawa T."/>
            <person name="Nagase T."/>
            <person name="Ohara O."/>
            <person name="Koga H."/>
        </authorList>
    </citation>
    <scope>NUCLEOTIDE SEQUENCE [LARGE SCALE MRNA] OF 371-1048 (ISOFORM 3)</scope>
    <source>
        <tissue>Embryonic tail</tissue>
    </source>
</reference>
<reference key="5">
    <citation type="journal article" date="2007" name="Proc. Natl. Acad. Sci. U.S.A.">
        <title>Large-scale phosphorylation analysis of mouse liver.</title>
        <authorList>
            <person name="Villen J."/>
            <person name="Beausoleil S.A."/>
            <person name="Gerber S.A."/>
            <person name="Gygi S.P."/>
        </authorList>
    </citation>
    <scope>PHOSPHORYLATION [LARGE SCALE ANALYSIS] AT SER-961</scope>
    <scope>IDENTIFICATION BY MASS SPECTROMETRY [LARGE SCALE ANALYSIS]</scope>
    <source>
        <tissue>Liver</tissue>
    </source>
</reference>
<reference key="6">
    <citation type="journal article" date="2009" name="EMBO Rep.">
        <title>Role of Varp, a Rab21 exchange factor and TI-VAMP/VAMP7 partner, in neurite growth.</title>
        <authorList>
            <person name="Burgo A."/>
            <person name="Sotirakis E."/>
            <person name="Simmler M.C."/>
            <person name="Verraes A."/>
            <person name="Chamot C."/>
            <person name="Simpson J.C."/>
            <person name="Lanzetti L."/>
            <person name="Proux-Gillardeaux V."/>
            <person name="Galli T."/>
        </authorList>
    </citation>
    <scope>FUNCTION</scope>
    <scope>INTERACTION WITH VAMP7</scope>
    <scope>SUBCELLULAR LOCATION</scope>
</reference>
<reference key="7">
    <citation type="journal article" date="2009" name="Mol. Biol. Cell">
        <title>Varp is a novel Rab32/38-binding protein that regulates Tyrp1 trafficking in melanocytes.</title>
        <authorList>
            <person name="Tamura K."/>
            <person name="Ohbayashi N."/>
            <person name="Maruta Y."/>
            <person name="Kanno E."/>
            <person name="Itoh T."/>
            <person name="Fukuda M."/>
        </authorList>
    </citation>
    <scope>FUNCTION</scope>
    <scope>INTERACTION WITH RAB32 AND RAB38</scope>
    <scope>SUBCELLULAR LOCATION</scope>
</reference>
<reference key="8">
    <citation type="journal article" date="2010" name="Cell">
        <title>A tissue-specific atlas of mouse protein phosphorylation and expression.</title>
        <authorList>
            <person name="Huttlin E.L."/>
            <person name="Jedrychowski M.P."/>
            <person name="Elias J.E."/>
            <person name="Goswami T."/>
            <person name="Rad R."/>
            <person name="Beausoleil S.A."/>
            <person name="Villen J."/>
            <person name="Haas W."/>
            <person name="Sowa M.E."/>
            <person name="Gygi S.P."/>
        </authorList>
    </citation>
    <scope>PHOSPHORYLATION [LARGE SCALE ANALYSIS] AT SER-961</scope>
    <scope>IDENTIFICATION BY MASS SPECTROMETRY [LARGE SCALE ANALYSIS]</scope>
    <source>
        <tissue>Lung</tissue>
        <tissue>Spleen</tissue>
    </source>
</reference>
<reference key="9">
    <citation type="journal article" date="2011" name="J. Biol. Chem.">
        <title>Structure-function analysis of VPS9-ankyrin-repeat protein (Varp) in the trafficking of tyrosinase-related protein 1 in melanocytes.</title>
        <authorList>
            <person name="Tamura K."/>
            <person name="Ohbayashi N."/>
            <person name="Ishibashi K."/>
            <person name="Fukuda M."/>
        </authorList>
    </citation>
    <scope>FUNCTION</scope>
    <scope>INTERACTION WITH RAB32; RAB38 AND VAMP7</scope>
    <scope>MUTAGENESIS OF GLN-509; TYR-550; TRP-575 AND TYR-577</scope>
</reference>
<reference key="10">
    <citation type="journal article" date="2012" name="Mol. Biol. Cell">
        <title>The Rab21-GEF activity of Varp, but not its Rab32/38 effector function, is required for dendrite formation in melanocytes.</title>
        <authorList>
            <person name="Ohbayashi N."/>
            <person name="Yatsu A."/>
            <person name="Tamura K."/>
            <person name="Fukuda M."/>
        </authorList>
    </citation>
    <scope>FUNCTION</scope>
    <scope>MUTAGENESIS OF ASP-310; TYR-350; GLN-509 AND TYR-550</scope>
</reference>
<reference key="11">
    <citation type="journal article" date="2016" name="J. Biol. Chem.">
        <title>RUTBC1 functions as a GTPase-activating protein for Rab32/38 and regulates melanogenic enzyme trafficking in melanocytes.</title>
        <authorList>
            <person name="Marubashi S."/>
            <person name="Shimada H."/>
            <person name="Fukuda M."/>
            <person name="Ohbayashi N."/>
        </authorList>
    </citation>
    <scope>FUNCTION</scope>
</reference>
<accession>Q3UMR0</accession>
<accession>Q6KAU0</accession>
<accession>Q6P1F9</accession>
<accession>Q7TNY8</accession>
<accession>Q8BUD2</accession>
<accession>Q91W65</accession>
<evidence type="ECO:0000250" key="1">
    <source>
        <dbReference type="UniProtKB" id="Q96NW4"/>
    </source>
</evidence>
<evidence type="ECO:0000255" key="2">
    <source>
        <dbReference type="PROSITE-ProRule" id="PRU00550"/>
    </source>
</evidence>
<evidence type="ECO:0000256" key="3">
    <source>
        <dbReference type="SAM" id="MobiDB-lite"/>
    </source>
</evidence>
<evidence type="ECO:0000269" key="4">
    <source>
    </source>
</evidence>
<evidence type="ECO:0000269" key="5">
    <source>
    </source>
</evidence>
<evidence type="ECO:0000269" key="6">
    <source>
    </source>
</evidence>
<evidence type="ECO:0000269" key="7">
    <source>
    </source>
</evidence>
<evidence type="ECO:0000269" key="8">
    <source>
    </source>
</evidence>
<evidence type="ECO:0000269" key="9">
    <source>
    </source>
</evidence>
<evidence type="ECO:0000303" key="10">
    <source>
    </source>
</evidence>
<evidence type="ECO:0000303" key="11">
    <source>
    </source>
</evidence>
<evidence type="ECO:0000305" key="12"/>
<evidence type="ECO:0007744" key="13">
    <source>
    </source>
</evidence>
<evidence type="ECO:0007744" key="14">
    <source>
    </source>
</evidence>
<organism>
    <name type="scientific">Mus musculus</name>
    <name type="common">Mouse</name>
    <dbReference type="NCBI Taxonomy" id="10090"/>
    <lineage>
        <taxon>Eukaryota</taxon>
        <taxon>Metazoa</taxon>
        <taxon>Chordata</taxon>
        <taxon>Craniata</taxon>
        <taxon>Vertebrata</taxon>
        <taxon>Euteleostomi</taxon>
        <taxon>Mammalia</taxon>
        <taxon>Eutheria</taxon>
        <taxon>Euarchontoglires</taxon>
        <taxon>Glires</taxon>
        <taxon>Rodentia</taxon>
        <taxon>Myomorpha</taxon>
        <taxon>Muroidea</taxon>
        <taxon>Muridae</taxon>
        <taxon>Murinae</taxon>
        <taxon>Mus</taxon>
        <taxon>Mus</taxon>
    </lineage>
</organism>
<keyword id="KW-0025">Alternative splicing</keyword>
<keyword id="KW-0040">ANK repeat</keyword>
<keyword id="KW-1003">Cell membrane</keyword>
<keyword id="KW-0968">Cytoplasmic vesicle</keyword>
<keyword id="KW-0967">Endosome</keyword>
<keyword id="KW-0343">GTPase activation</keyword>
<keyword id="KW-0344">Guanine-nucleotide releasing factor</keyword>
<keyword id="KW-0458">Lysosome</keyword>
<keyword id="KW-0472">Membrane</keyword>
<keyword id="KW-0597">Phosphoprotein</keyword>
<keyword id="KW-0653">Protein transport</keyword>
<keyword id="KW-1185">Reference proteome</keyword>
<keyword id="KW-0677">Repeat</keyword>
<keyword id="KW-0813">Transport</keyword>
<gene>
    <name type="primary">Ankrd27</name>
    <name type="synonym">Varp</name>
</gene>
<comment type="function">
    <text evidence="1 5 7 9">May be a guanine exchange factor (GEF) for Rab21, Rab32 and Rab38 and regulate endosome dynamics (By similarity). May regulate the participation of VAMP7 in membrane fusion events; in vitro inhibits VAMP7-mediated SNARE complex formation by trapping VAMP7 in a closed, fusogenically inactive conformation (By similarity). Involved in peripheral melanosomal distribution of TYRP1 in melanocytes; the function, which probably is implicating vesicle-trafficking, includes cooperation with Rab32, Rab38 and VAMP7 (PubMed:19403694, PubMed:21187289). Involved in the regulation of neurite growth; the function seems to require its GEF activity, probably towards Rab21, and VAMP7 but not Rab32/38 (PubMed:19745841, PubMed:22171327). Proposed to be involved in Golgi sorting of VAMP7 and transport of VAMP7 vesicles to the cell surface; the function seems to implicate kinesin heavy chain isoform 5 proteins, GOLGA4, RAB21 and MACF1. Required for the colocalization of VAMP7 and Rab21, probably on TGN sites (By similarity). Involved in GLUT1 endosome-to-plasma membrane trafficking; the function is dependent of association with VPS29 (By similarity). Regulates the proper trafficking of melanogenic enzymes TYR, TYRP1 and DCT/TYRP2 to melanosomes in melanocytes (PubMed:26620560).</text>
</comment>
<comment type="subunit">
    <text evidence="1 4 5 7">Interacts with RAB21 (GDP-bound form), VPS29, KIF5A, KIF5C, GOLGA4 (By similarity). Interacts with RAB32 (GTP-bound form), RAB38 (GTP-bound form), VAMP7 (PubMed:19403694, PubMed:21187289). Interacts with low affinity with RAB5 (By similarity). ANKRD27:RAB32 heterodimers can homodimerize to form tetramers (By similarity). Can interact with RAB38 or RAB32, VPS29 and VAMP7 simultaneously (By similarity). A decreased interaction with RAB32 seen in the presence of SGSM2 (By similarity).</text>
</comment>
<comment type="interaction">
    <interactant intactId="EBI-1993429">
        <id>Q3UMR0</id>
    </interactant>
    <interactant intactId="EBI-1993463">
        <id>Q8QZZ8</id>
        <label>Rab38</label>
    </interactant>
    <organismsDiffer>false</organismsDiffer>
    <experiments>5</experiments>
</comment>
<comment type="subcellular location">
    <subcellularLocation>
        <location evidence="1">Early endosome</location>
    </subcellularLocation>
    <subcellularLocation>
        <location evidence="1">Late endosome</location>
    </subcellularLocation>
    <subcellularLocation>
        <location evidence="1">Cytoplasmic vesicle membrane</location>
    </subcellularLocation>
    <subcellularLocation>
        <location evidence="1">Lysosome</location>
    </subcellularLocation>
    <subcellularLocation>
        <location evidence="1">Cell membrane</location>
    </subcellularLocation>
    <subcellularLocation>
        <location evidence="5">Melanosome</location>
    </subcellularLocation>
    <subcellularLocation>
        <location evidence="5">Cytoplasmic vesicle</location>
    </subcellularLocation>
    <text evidence="6">Colocalizes with VAMP7 in transport vesicles in the shaft of hippocampal neurons.</text>
</comment>
<comment type="alternative products">
    <event type="alternative splicing"/>
    <isoform>
        <id>Q3UMR0-1</id>
        <name>1</name>
        <sequence type="displayed"/>
    </isoform>
    <isoform>
        <id>Q3UMR0-2</id>
        <name>2</name>
        <sequence type="described" ref="VSP_022792"/>
    </isoform>
    <isoform>
        <id>Q3UMR0-3</id>
        <name>3</name>
        <sequence type="described" ref="VSP_022791"/>
    </isoform>
</comment>
<comment type="sequence caution" evidence="12">
    <conflict type="frameshift">
        <sequence resource="EMBL-CDS" id="AAP94281"/>
    </conflict>
</comment>
<name>ANR27_MOUSE</name>